<reference key="1">
    <citation type="submission" date="2008-04" db="EMBL/GenBank/DDBJ databases">
        <title>Complete sequence of Clostridium botulinum strain Eklund.</title>
        <authorList>
            <person name="Brinkac L.M."/>
            <person name="Brown J.L."/>
            <person name="Bruce D."/>
            <person name="Detter C."/>
            <person name="Munk C."/>
            <person name="Smith L.A."/>
            <person name="Smith T.J."/>
            <person name="Sutton G."/>
            <person name="Brettin T.S."/>
        </authorList>
    </citation>
    <scope>NUCLEOTIDE SEQUENCE [LARGE SCALE GENOMIC DNA]</scope>
    <source>
        <strain>Eklund 17B / Type B</strain>
    </source>
</reference>
<gene>
    <name evidence="1" type="primary">prfA</name>
    <name type="ordered locus">CLL_A0483</name>
</gene>
<accession>B2TJY5</accession>
<protein>
    <recommendedName>
        <fullName evidence="1">Peptide chain release factor 1</fullName>
        <shortName evidence="1">RF-1</shortName>
    </recommendedName>
</protein>
<dbReference type="EMBL" id="CP001056">
    <property type="protein sequence ID" value="ACD25129.1"/>
    <property type="molecule type" value="Genomic_DNA"/>
</dbReference>
<dbReference type="SMR" id="B2TJY5"/>
<dbReference type="KEGG" id="cbk:CLL_A0483"/>
<dbReference type="PATRIC" id="fig|935198.13.peg.438"/>
<dbReference type="HOGENOM" id="CLU_036856_0_1_9"/>
<dbReference type="Proteomes" id="UP000001195">
    <property type="component" value="Chromosome"/>
</dbReference>
<dbReference type="GO" id="GO:0005737">
    <property type="term" value="C:cytoplasm"/>
    <property type="evidence" value="ECO:0007669"/>
    <property type="project" value="UniProtKB-SubCell"/>
</dbReference>
<dbReference type="GO" id="GO:0016149">
    <property type="term" value="F:translation release factor activity, codon specific"/>
    <property type="evidence" value="ECO:0007669"/>
    <property type="project" value="UniProtKB-UniRule"/>
</dbReference>
<dbReference type="FunFam" id="3.30.160.20:FF:000004">
    <property type="entry name" value="Peptide chain release factor 1"/>
    <property type="match status" value="1"/>
</dbReference>
<dbReference type="FunFam" id="3.30.70.1660:FF:000002">
    <property type="entry name" value="Peptide chain release factor 1"/>
    <property type="match status" value="1"/>
</dbReference>
<dbReference type="FunFam" id="3.30.70.1660:FF:000004">
    <property type="entry name" value="Peptide chain release factor 1"/>
    <property type="match status" value="1"/>
</dbReference>
<dbReference type="Gene3D" id="3.30.160.20">
    <property type="match status" value="1"/>
</dbReference>
<dbReference type="Gene3D" id="3.30.70.1660">
    <property type="match status" value="1"/>
</dbReference>
<dbReference type="Gene3D" id="6.10.140.1950">
    <property type="match status" value="1"/>
</dbReference>
<dbReference type="HAMAP" id="MF_00093">
    <property type="entry name" value="Rel_fac_1"/>
    <property type="match status" value="1"/>
</dbReference>
<dbReference type="InterPro" id="IPR005139">
    <property type="entry name" value="PCRF"/>
</dbReference>
<dbReference type="InterPro" id="IPR000352">
    <property type="entry name" value="Pep_chain_release_fac_I"/>
</dbReference>
<dbReference type="InterPro" id="IPR045853">
    <property type="entry name" value="Pep_chain_release_fac_I_sf"/>
</dbReference>
<dbReference type="InterPro" id="IPR050057">
    <property type="entry name" value="Prokaryotic/Mito_RF"/>
</dbReference>
<dbReference type="InterPro" id="IPR004373">
    <property type="entry name" value="RF-1"/>
</dbReference>
<dbReference type="NCBIfam" id="TIGR00019">
    <property type="entry name" value="prfA"/>
    <property type="match status" value="1"/>
</dbReference>
<dbReference type="NCBIfam" id="NF001859">
    <property type="entry name" value="PRK00591.1"/>
    <property type="match status" value="1"/>
</dbReference>
<dbReference type="PANTHER" id="PTHR43804">
    <property type="entry name" value="LD18447P"/>
    <property type="match status" value="1"/>
</dbReference>
<dbReference type="PANTHER" id="PTHR43804:SF7">
    <property type="entry name" value="LD18447P"/>
    <property type="match status" value="1"/>
</dbReference>
<dbReference type="Pfam" id="PF03462">
    <property type="entry name" value="PCRF"/>
    <property type="match status" value="1"/>
</dbReference>
<dbReference type="Pfam" id="PF00472">
    <property type="entry name" value="RF-1"/>
    <property type="match status" value="1"/>
</dbReference>
<dbReference type="SMART" id="SM00937">
    <property type="entry name" value="PCRF"/>
    <property type="match status" value="1"/>
</dbReference>
<dbReference type="SUPFAM" id="SSF75620">
    <property type="entry name" value="Release factor"/>
    <property type="match status" value="1"/>
</dbReference>
<dbReference type="PROSITE" id="PS00745">
    <property type="entry name" value="RF_PROK_I"/>
    <property type="match status" value="1"/>
</dbReference>
<name>RF1_CLOBB</name>
<sequence length="360" mass="41032">MLLDKLAFIENKYDELSVKISDPSIMQNQNEWRKLCKEQADLEIIVNAYKEYKQVIEDLQVNKEMLSDESDREMKEMLNEEIASLSQREVELEKEIQILLLPKDPNDDKNVFVEIRGGAGGEEAALFAYNLFRMYTRYAERQRWSTEIMSLNETDIGGFKEVVFMIKGNGAYSKLKYESGVHRVQRVPDTESSGRIHTSTVTVAVLPEVDDVEIEIADKDVRIDVFRASGHGGQCVNTTDSAVRITHLPSGLVVSCQDEKSQLKNKEKAMKVLRSRLFEKAEQERADGIAADRKSQVGTGDRSERIRTYNYPQGRITDHRIGLTLYKLDSFLDGDVQEMINALITADQAEKMQKMGNSEM</sequence>
<keyword id="KW-0963">Cytoplasm</keyword>
<keyword id="KW-0488">Methylation</keyword>
<keyword id="KW-0648">Protein biosynthesis</keyword>
<evidence type="ECO:0000255" key="1">
    <source>
        <dbReference type="HAMAP-Rule" id="MF_00093"/>
    </source>
</evidence>
<proteinExistence type="inferred from homology"/>
<comment type="function">
    <text evidence="1">Peptide chain release factor 1 directs the termination of translation in response to the peptide chain termination codons UAG and UAA.</text>
</comment>
<comment type="subcellular location">
    <subcellularLocation>
        <location evidence="1">Cytoplasm</location>
    </subcellularLocation>
</comment>
<comment type="PTM">
    <text evidence="1">Methylated by PrmC. Methylation increases the termination efficiency of RF1.</text>
</comment>
<comment type="similarity">
    <text evidence="1">Belongs to the prokaryotic/mitochondrial release factor family.</text>
</comment>
<feature type="chain" id="PRO_1000093442" description="Peptide chain release factor 1">
    <location>
        <begin position="1"/>
        <end position="360"/>
    </location>
</feature>
<feature type="modified residue" description="N5-methylglutamine" evidence="1">
    <location>
        <position position="234"/>
    </location>
</feature>
<organism>
    <name type="scientific">Clostridium botulinum (strain Eklund 17B / Type B)</name>
    <dbReference type="NCBI Taxonomy" id="935198"/>
    <lineage>
        <taxon>Bacteria</taxon>
        <taxon>Bacillati</taxon>
        <taxon>Bacillota</taxon>
        <taxon>Clostridia</taxon>
        <taxon>Eubacteriales</taxon>
        <taxon>Clostridiaceae</taxon>
        <taxon>Clostridium</taxon>
    </lineage>
</organism>